<name>SYK_CAMJD</name>
<gene>
    <name evidence="1" type="primary">lysS</name>
    <name type="ordered locus">JJD26997_1556</name>
</gene>
<keyword id="KW-0030">Aminoacyl-tRNA synthetase</keyword>
<keyword id="KW-0067">ATP-binding</keyword>
<keyword id="KW-0963">Cytoplasm</keyword>
<keyword id="KW-0436">Ligase</keyword>
<keyword id="KW-0460">Magnesium</keyword>
<keyword id="KW-0479">Metal-binding</keyword>
<keyword id="KW-0547">Nucleotide-binding</keyword>
<keyword id="KW-0648">Protein biosynthesis</keyword>
<dbReference type="EC" id="6.1.1.6" evidence="1"/>
<dbReference type="EMBL" id="CP000768">
    <property type="protein sequence ID" value="ABS43931.1"/>
    <property type="molecule type" value="Genomic_DNA"/>
</dbReference>
<dbReference type="SMR" id="A7H4X7"/>
<dbReference type="KEGG" id="cjd:JJD26997_1556"/>
<dbReference type="HOGENOM" id="CLU_008255_6_0_7"/>
<dbReference type="Proteomes" id="UP000002302">
    <property type="component" value="Chromosome"/>
</dbReference>
<dbReference type="GO" id="GO:0005829">
    <property type="term" value="C:cytosol"/>
    <property type="evidence" value="ECO:0007669"/>
    <property type="project" value="TreeGrafter"/>
</dbReference>
<dbReference type="GO" id="GO:0005524">
    <property type="term" value="F:ATP binding"/>
    <property type="evidence" value="ECO:0007669"/>
    <property type="project" value="UniProtKB-UniRule"/>
</dbReference>
<dbReference type="GO" id="GO:0004824">
    <property type="term" value="F:lysine-tRNA ligase activity"/>
    <property type="evidence" value="ECO:0007669"/>
    <property type="project" value="UniProtKB-UniRule"/>
</dbReference>
<dbReference type="GO" id="GO:0000287">
    <property type="term" value="F:magnesium ion binding"/>
    <property type="evidence" value="ECO:0007669"/>
    <property type="project" value="UniProtKB-UniRule"/>
</dbReference>
<dbReference type="GO" id="GO:0000049">
    <property type="term" value="F:tRNA binding"/>
    <property type="evidence" value="ECO:0007669"/>
    <property type="project" value="TreeGrafter"/>
</dbReference>
<dbReference type="GO" id="GO:0006430">
    <property type="term" value="P:lysyl-tRNA aminoacylation"/>
    <property type="evidence" value="ECO:0007669"/>
    <property type="project" value="UniProtKB-UniRule"/>
</dbReference>
<dbReference type="CDD" id="cd00775">
    <property type="entry name" value="LysRS_core"/>
    <property type="match status" value="1"/>
</dbReference>
<dbReference type="CDD" id="cd04322">
    <property type="entry name" value="LysRS_N"/>
    <property type="match status" value="1"/>
</dbReference>
<dbReference type="Gene3D" id="3.30.930.10">
    <property type="entry name" value="Bira Bifunctional Protein, Domain 2"/>
    <property type="match status" value="1"/>
</dbReference>
<dbReference type="Gene3D" id="2.40.50.140">
    <property type="entry name" value="Nucleic acid-binding proteins"/>
    <property type="match status" value="1"/>
</dbReference>
<dbReference type="HAMAP" id="MF_00252">
    <property type="entry name" value="Lys_tRNA_synth_class2"/>
    <property type="match status" value="1"/>
</dbReference>
<dbReference type="InterPro" id="IPR004364">
    <property type="entry name" value="Aa-tRNA-synt_II"/>
</dbReference>
<dbReference type="InterPro" id="IPR006195">
    <property type="entry name" value="aa-tRNA-synth_II"/>
</dbReference>
<dbReference type="InterPro" id="IPR045864">
    <property type="entry name" value="aa-tRNA-synth_II/BPL/LPL"/>
</dbReference>
<dbReference type="InterPro" id="IPR002313">
    <property type="entry name" value="Lys-tRNA-ligase_II"/>
</dbReference>
<dbReference type="InterPro" id="IPR044136">
    <property type="entry name" value="Lys-tRNA-ligase_II_N"/>
</dbReference>
<dbReference type="InterPro" id="IPR018149">
    <property type="entry name" value="Lys-tRNA-synth_II_C"/>
</dbReference>
<dbReference type="InterPro" id="IPR012340">
    <property type="entry name" value="NA-bd_OB-fold"/>
</dbReference>
<dbReference type="InterPro" id="IPR004365">
    <property type="entry name" value="NA-bd_OB_tRNA"/>
</dbReference>
<dbReference type="NCBIfam" id="TIGR00499">
    <property type="entry name" value="lysS_bact"/>
    <property type="match status" value="1"/>
</dbReference>
<dbReference type="NCBIfam" id="NF001756">
    <property type="entry name" value="PRK00484.1"/>
    <property type="match status" value="1"/>
</dbReference>
<dbReference type="PANTHER" id="PTHR42918:SF15">
    <property type="entry name" value="LYSINE--TRNA LIGASE, CHLOROPLASTIC_MITOCHONDRIAL"/>
    <property type="match status" value="1"/>
</dbReference>
<dbReference type="PANTHER" id="PTHR42918">
    <property type="entry name" value="LYSYL-TRNA SYNTHETASE"/>
    <property type="match status" value="1"/>
</dbReference>
<dbReference type="Pfam" id="PF00152">
    <property type="entry name" value="tRNA-synt_2"/>
    <property type="match status" value="1"/>
</dbReference>
<dbReference type="Pfam" id="PF01336">
    <property type="entry name" value="tRNA_anti-codon"/>
    <property type="match status" value="1"/>
</dbReference>
<dbReference type="PRINTS" id="PR00982">
    <property type="entry name" value="TRNASYNTHLYS"/>
</dbReference>
<dbReference type="SUPFAM" id="SSF55681">
    <property type="entry name" value="Class II aaRS and biotin synthetases"/>
    <property type="match status" value="1"/>
</dbReference>
<dbReference type="SUPFAM" id="SSF50249">
    <property type="entry name" value="Nucleic acid-binding proteins"/>
    <property type="match status" value="1"/>
</dbReference>
<dbReference type="PROSITE" id="PS50862">
    <property type="entry name" value="AA_TRNA_LIGASE_II"/>
    <property type="match status" value="1"/>
</dbReference>
<proteinExistence type="inferred from homology"/>
<protein>
    <recommendedName>
        <fullName evidence="1">Lysine--tRNA ligase</fullName>
        <ecNumber evidence="1">6.1.1.6</ecNumber>
    </recommendedName>
    <alternativeName>
        <fullName evidence="1">Lysyl-tRNA synthetase</fullName>
        <shortName evidence="1">LysRS</shortName>
    </alternativeName>
</protein>
<evidence type="ECO:0000255" key="1">
    <source>
        <dbReference type="HAMAP-Rule" id="MF_00252"/>
    </source>
</evidence>
<sequence length="501" mass="57749">MFDNILEQQRIEKAKELKNLGINPYPHFLEKEMSLKTFKDKFSYILEQVEKRDESVNAVVAGRLKLLRIAGKSIFANIEDEDTNLQIYFSKDSVGEELYTILKKNLEAGDIVLVKGFPFVTKTGEFSLHASEVKLATKAIVPLPEKYHGLTDIEQRYRKRYVDMIMNAEVRKDFLVRSKVVSLIRHFFENKGFLEVETPMMHPIAGGANAKPFVTFHNSLGVERFLRIAPELYLKRLVVGGFEAVFEINRCFRNEGMDLTHNPEFTTIEFYWAYHNYKDLMDLTEELFALLLDKLNLGKTIEFDGKMIDFSKPFERITYKDALCKYGGLDRDLIEDKEKILAKLKTDGFEANEKLELGHLQAELFDNYVEEKLINPTFVSDFPISISPLSRRSDENSQIAERFELFICGRELANGFNELNDPLDQYERFLKQIEAKNAGDEEACEMDEDFVNALGYGMPPTAGQGIGIDRLVMLLTNKKSIRDVILFPAMRPLKSELKEKE</sequence>
<comment type="catalytic activity">
    <reaction evidence="1">
        <text>tRNA(Lys) + L-lysine + ATP = L-lysyl-tRNA(Lys) + AMP + diphosphate</text>
        <dbReference type="Rhea" id="RHEA:20792"/>
        <dbReference type="Rhea" id="RHEA-COMP:9696"/>
        <dbReference type="Rhea" id="RHEA-COMP:9697"/>
        <dbReference type="ChEBI" id="CHEBI:30616"/>
        <dbReference type="ChEBI" id="CHEBI:32551"/>
        <dbReference type="ChEBI" id="CHEBI:33019"/>
        <dbReference type="ChEBI" id="CHEBI:78442"/>
        <dbReference type="ChEBI" id="CHEBI:78529"/>
        <dbReference type="ChEBI" id="CHEBI:456215"/>
        <dbReference type="EC" id="6.1.1.6"/>
    </reaction>
</comment>
<comment type="cofactor">
    <cofactor evidence="1">
        <name>Mg(2+)</name>
        <dbReference type="ChEBI" id="CHEBI:18420"/>
    </cofactor>
    <text evidence="1">Binds 3 Mg(2+) ions per subunit.</text>
</comment>
<comment type="subunit">
    <text evidence="1">Homodimer.</text>
</comment>
<comment type="subcellular location">
    <subcellularLocation>
        <location evidence="1">Cytoplasm</location>
    </subcellularLocation>
</comment>
<comment type="similarity">
    <text evidence="1">Belongs to the class-II aminoacyl-tRNA synthetase family.</text>
</comment>
<accession>A7H4X7</accession>
<feature type="chain" id="PRO_1000012862" description="Lysine--tRNA ligase">
    <location>
        <begin position="1"/>
        <end position="501"/>
    </location>
</feature>
<feature type="binding site" evidence="1">
    <location>
        <position position="404"/>
    </location>
    <ligand>
        <name>Mg(2+)</name>
        <dbReference type="ChEBI" id="CHEBI:18420"/>
        <label>1</label>
    </ligand>
</feature>
<feature type="binding site" evidence="1">
    <location>
        <position position="411"/>
    </location>
    <ligand>
        <name>Mg(2+)</name>
        <dbReference type="ChEBI" id="CHEBI:18420"/>
        <label>1</label>
    </ligand>
</feature>
<feature type="binding site" evidence="1">
    <location>
        <position position="411"/>
    </location>
    <ligand>
        <name>Mg(2+)</name>
        <dbReference type="ChEBI" id="CHEBI:18420"/>
        <label>2</label>
    </ligand>
</feature>
<reference key="1">
    <citation type="submission" date="2007-07" db="EMBL/GenBank/DDBJ databases">
        <title>Complete genome sequence of Campylobacter jejuni subsp doylei 269.97 isolated from human blood.</title>
        <authorList>
            <person name="Fouts D.E."/>
            <person name="Mongodin E.F."/>
            <person name="Puiu D."/>
            <person name="Sebastian Y."/>
            <person name="Miller W.G."/>
            <person name="Mandrell R.E."/>
            <person name="Lastovica A.J."/>
            <person name="Nelson K.E."/>
        </authorList>
    </citation>
    <scope>NUCLEOTIDE SEQUENCE [LARGE SCALE GENOMIC DNA]</scope>
    <source>
        <strain>ATCC BAA-1458 / RM4099 / 269.97</strain>
    </source>
</reference>
<organism>
    <name type="scientific">Campylobacter jejuni subsp. doylei (strain ATCC BAA-1458 / RM4099 / 269.97)</name>
    <dbReference type="NCBI Taxonomy" id="360109"/>
    <lineage>
        <taxon>Bacteria</taxon>
        <taxon>Pseudomonadati</taxon>
        <taxon>Campylobacterota</taxon>
        <taxon>Epsilonproteobacteria</taxon>
        <taxon>Campylobacterales</taxon>
        <taxon>Campylobacteraceae</taxon>
        <taxon>Campylobacter</taxon>
    </lineage>
</organism>